<protein>
    <recommendedName>
        <fullName evidence="6">4-hydroxyproline 2-epimerase</fullName>
        <shortName>4Hyp 2-epimerase</shortName>
        <shortName evidence="6">4HypE</shortName>
        <ecNumber evidence="3 4">5.1.1.8</ecNumber>
    </recommendedName>
    <alternativeName>
        <fullName evidence="5">Hydroxyproline-2-epimerase</fullName>
        <shortName evidence="5">BsHyPRE</shortName>
    </alternativeName>
</protein>
<accession>Q8FYS0</accession>
<accession>A8DEY2</accession>
<accession>G0K7C9</accession>
<proteinExistence type="evidence at protein level"/>
<feature type="chain" id="PRO_0000354032" description="4-hydroxyproline 2-epimerase">
    <location>
        <begin position="1"/>
        <end position="333"/>
    </location>
</feature>
<feature type="active site" description="Proton acceptor" evidence="2">
    <location>
        <position position="90"/>
    </location>
</feature>
<feature type="active site" description="Proton donor" evidence="2">
    <location>
        <position position="253"/>
    </location>
</feature>
<feature type="binding site" evidence="2">
    <location>
        <begin position="91"/>
        <end position="92"/>
    </location>
    <ligand>
        <name>substrate</name>
    </ligand>
</feature>
<feature type="binding site" evidence="2">
    <location>
        <position position="223"/>
    </location>
    <ligand>
        <name>substrate</name>
    </ligand>
</feature>
<feature type="binding site" evidence="2">
    <location>
        <position position="249"/>
    </location>
    <ligand>
        <name>substrate</name>
    </ligand>
</feature>
<feature type="binding site" evidence="2">
    <location>
        <begin position="254"/>
        <end position="255"/>
    </location>
    <ligand>
        <name>substrate</name>
    </ligand>
</feature>
<comment type="function">
    <text evidence="3 4">Allows intracellular utilization of 4-hydroxyproline, one of the major constituents of host collagen, by converting trans-4-hydroxy-L-proline (t4LHyp) to cis-4-hydroxy-D-proline (c4DHyp), which can be further metabolized by intracellular 4-hydroxy-D-proline oxidases. Strong B-cell mitogen. Plays an important role in the regulation of intra- and extracellular amino acid pools, allowing the bacterium to profit from host precursors and enzymatic pathways. Displays no proline racemase activity.</text>
</comment>
<comment type="catalytic activity">
    <reaction evidence="3 4">
        <text>trans-4-hydroxy-L-proline = cis-4-hydroxy-D-proline</text>
        <dbReference type="Rhea" id="RHEA:21152"/>
        <dbReference type="ChEBI" id="CHEBI:57690"/>
        <dbReference type="ChEBI" id="CHEBI:58375"/>
        <dbReference type="EC" id="5.1.1.8"/>
    </reaction>
</comment>
<comment type="activity regulation">
    <text evidence="3">Inhibited by iodoacetate, iodoacetamide and by high amounts (10 mM) of pyrrole-2-carboxylic acid (PYC). Not inhibited by PYC at 1 mM.</text>
</comment>
<comment type="biophysicochemical properties">
    <kinetics>
        <KM evidence="3">7.6 mM for 4-hydroxy-L-proline</KM>
        <KM evidence="3">10.8 mM for 4-hydroxy-D-proline</KM>
        <Vmax evidence="3">0.5 uM/sec/mg enzyme with 4-hydroxy-L-proline as substrate (at 37 degrees Celsius)</Vmax>
        <Vmax evidence="3">0.75 uM/sec/mg enzyme with 4-hydroxy-D-proline as substrate (at 37 degrees Celsius)</Vmax>
    </kinetics>
</comment>
<comment type="subunit">
    <text evidence="1">Homodimer.</text>
</comment>
<comment type="miscellaneous">
    <text>This enzyme does not require pyridoxal phosphate (PLP) as a cofactor.</text>
</comment>
<comment type="similarity">
    <text evidence="7">Belongs to the proline racemase family.</text>
</comment>
<name>4HYPE_BRUSU</name>
<sequence>MARHSFFCVDGHTCGNPVRLVAGGGPNLNGSTMMEKRAHFLAEYDWIRTGLMFEPRGHDMMSGSILYPPTRPDCDVAVLFIETSGCLPMCGHGTIGTVTMAIEQGLVTPKTPGKLNLDTPAGLVAIEYEQDGQYVERVRLTNVPAFLYAEGLEVECPDLGPIKVDVAYGGNFYAIVEPQENYTDMDDYSALQLIAWSPVLRQRLNEKYKFQHPELPDINRLSHILWTGKPKHPQAHARNAVFYGDKAIDRSPCGTGTSARMAQLAAKGKLKPGDEFIHESIIGSLFHGRVERAAEVAGRPAIVPSIAGWARMTGYNTIFIDDRDPFAHGFSVA</sequence>
<dbReference type="EC" id="5.1.1.8" evidence="3 4"/>
<dbReference type="EMBL" id="EF495343">
    <property type="protein sequence ID" value="ABS82395.1"/>
    <property type="molecule type" value="Genomic_DNA"/>
</dbReference>
<dbReference type="EMBL" id="AE014291">
    <property type="protein sequence ID" value="AAN30688.1"/>
    <property type="molecule type" value="Genomic_DNA"/>
</dbReference>
<dbReference type="EMBL" id="CP002997">
    <property type="protein sequence ID" value="AEM19105.1"/>
    <property type="molecule type" value="Genomic_DNA"/>
</dbReference>
<dbReference type="RefSeq" id="WP_004690494.1">
    <property type="nucleotide sequence ID" value="NZ_KN046804.1"/>
</dbReference>
<dbReference type="SMR" id="Q8FYS0"/>
<dbReference type="KEGG" id="bms:BR1792"/>
<dbReference type="KEGG" id="bsi:BS1330_I1786"/>
<dbReference type="PATRIC" id="fig|204722.22.peg.66"/>
<dbReference type="HOGENOM" id="CLU_036729_0_0_5"/>
<dbReference type="PhylomeDB" id="Q8FYS0"/>
<dbReference type="BRENDA" id="5.1.1.8">
    <property type="organism ID" value="8693"/>
</dbReference>
<dbReference type="Proteomes" id="UP000007104">
    <property type="component" value="Chromosome I"/>
</dbReference>
<dbReference type="GO" id="GO:0047580">
    <property type="term" value="F:4-hydroxyproline epimerase activity"/>
    <property type="evidence" value="ECO:0007669"/>
    <property type="project" value="UniProtKB-EC"/>
</dbReference>
<dbReference type="FunFam" id="3.10.310.10:FF:000005">
    <property type="entry name" value="Proline racemase"/>
    <property type="match status" value="1"/>
</dbReference>
<dbReference type="Gene3D" id="3.10.310.10">
    <property type="entry name" value="Diaminopimelate Epimerase, Chain A, domain 1"/>
    <property type="match status" value="2"/>
</dbReference>
<dbReference type="InterPro" id="IPR008794">
    <property type="entry name" value="Pro_racemase_fam"/>
</dbReference>
<dbReference type="NCBIfam" id="NF010578">
    <property type="entry name" value="PRK13971.1"/>
    <property type="match status" value="1"/>
</dbReference>
<dbReference type="PANTHER" id="PTHR33442">
    <property type="entry name" value="TRANS-3-HYDROXY-L-PROLINE DEHYDRATASE"/>
    <property type="match status" value="1"/>
</dbReference>
<dbReference type="PANTHER" id="PTHR33442:SF1">
    <property type="entry name" value="TRANS-3-HYDROXY-L-PROLINE DEHYDRATASE"/>
    <property type="match status" value="1"/>
</dbReference>
<dbReference type="Pfam" id="PF05544">
    <property type="entry name" value="Pro_racemase"/>
    <property type="match status" value="1"/>
</dbReference>
<dbReference type="PIRSF" id="PIRSF029792">
    <property type="entry name" value="Pro_racemase"/>
    <property type="match status" value="1"/>
</dbReference>
<dbReference type="SFLD" id="SFLDS00028">
    <property type="entry name" value="Proline_Racemase"/>
    <property type="match status" value="1"/>
</dbReference>
<dbReference type="SUPFAM" id="SSF54506">
    <property type="entry name" value="Diaminopimelate epimerase-like"/>
    <property type="match status" value="1"/>
</dbReference>
<evidence type="ECO:0000250" key="1"/>
<evidence type="ECO:0000250" key="2">
    <source>
        <dbReference type="UniProtKB" id="Q4KGU2"/>
    </source>
</evidence>
<evidence type="ECO:0000269" key="3">
    <source>
    </source>
</evidence>
<evidence type="ECO:0000269" key="4">
    <source>
    </source>
</evidence>
<evidence type="ECO:0000303" key="5">
    <source>
    </source>
</evidence>
<evidence type="ECO:0000303" key="6">
    <source>
    </source>
</evidence>
<evidence type="ECO:0000305" key="7"/>
<keyword id="KW-0413">Isomerase</keyword>
<organism>
    <name type="scientific">Brucella suis biovar 1 (strain 1330)</name>
    <dbReference type="NCBI Taxonomy" id="204722"/>
    <lineage>
        <taxon>Bacteria</taxon>
        <taxon>Pseudomonadati</taxon>
        <taxon>Pseudomonadota</taxon>
        <taxon>Alphaproteobacteria</taxon>
        <taxon>Hyphomicrobiales</taxon>
        <taxon>Brucellaceae</taxon>
        <taxon>Brucella/Ochrobactrum group</taxon>
        <taxon>Brucella</taxon>
    </lineage>
</organism>
<gene>
    <name type="ordered locus">BR1792</name>
    <name type="ordered locus">BS1330_I1786</name>
</gene>
<reference key="1">
    <citation type="journal article" date="2007" name="PLoS ONE">
        <title>Molecular and structural discrimination of proline racemase and hydroxyproline-2-epimerase from nosocomial and bacterial pathogens.</title>
        <authorList>
            <person name="Goytia M."/>
            <person name="Chamond N."/>
            <person name="Cosson A."/>
            <person name="Coatnoan N."/>
            <person name="Hermant D."/>
            <person name="Berneman A."/>
            <person name="Minoprio P."/>
        </authorList>
    </citation>
    <scope>NUCLEOTIDE SEQUENCE [GENOMIC DNA]</scope>
    <scope>FUNCTION</scope>
    <scope>CATALYTIC ACTIVITY</scope>
    <scope>ACTIVITY REGULATION</scope>
    <scope>BIOPHYSICOCHEMICAL PROPERTIES</scope>
    <source>
        <strain>1330</strain>
    </source>
</reference>
<reference key="2">
    <citation type="journal article" date="2002" name="Proc. Natl. Acad. Sci. U.S.A.">
        <title>The Brucella suis genome reveals fundamental similarities between animal and plant pathogens and symbionts.</title>
        <authorList>
            <person name="Paulsen I.T."/>
            <person name="Seshadri R."/>
            <person name="Nelson K.E."/>
            <person name="Eisen J.A."/>
            <person name="Heidelberg J.F."/>
            <person name="Read T.D."/>
            <person name="Dodson R.J."/>
            <person name="Umayam L.A."/>
            <person name="Brinkac L.M."/>
            <person name="Beanan M.J."/>
            <person name="Daugherty S.C."/>
            <person name="DeBoy R.T."/>
            <person name="Durkin A.S."/>
            <person name="Kolonay J.F."/>
            <person name="Madupu R."/>
            <person name="Nelson W.C."/>
            <person name="Ayodeji B."/>
            <person name="Kraul M."/>
            <person name="Shetty J."/>
            <person name="Malek J.A."/>
            <person name="Van Aken S.E."/>
            <person name="Riedmuller S."/>
            <person name="Tettelin H."/>
            <person name="Gill S.R."/>
            <person name="White O."/>
            <person name="Salzberg S.L."/>
            <person name="Hoover D.L."/>
            <person name="Lindler L.E."/>
            <person name="Halling S.M."/>
            <person name="Boyle S.M."/>
            <person name="Fraser C.M."/>
        </authorList>
    </citation>
    <scope>NUCLEOTIDE SEQUENCE [LARGE SCALE GENOMIC DNA]</scope>
    <source>
        <strain>1330</strain>
    </source>
</reference>
<reference key="3">
    <citation type="journal article" date="2011" name="J. Bacteriol.">
        <title>Revised genome sequence of Brucella suis 1330.</title>
        <authorList>
            <person name="Tae H."/>
            <person name="Shallom S."/>
            <person name="Settlage R."/>
            <person name="Preston D."/>
            <person name="Adams L.G."/>
            <person name="Garner H.R."/>
        </authorList>
    </citation>
    <scope>NUCLEOTIDE SEQUENCE [LARGE SCALE GENOMIC DNA]</scope>
    <source>
        <strain>1330</strain>
    </source>
</reference>
<reference key="4">
    <citation type="journal article" date="2014" name="Elife">
        <title>Prediction and characterization of enzymatic activities guided by sequence similarity and genome neighborhood networks.</title>
        <authorList>
            <person name="Zhao S."/>
            <person name="Sakai A."/>
            <person name="Zhang X."/>
            <person name="Vetting M.W."/>
            <person name="Kumar R."/>
            <person name="Hillerich B."/>
            <person name="San Francisco B."/>
            <person name="Solbiati J."/>
            <person name="Steves A."/>
            <person name="Brown S."/>
            <person name="Akiva E."/>
            <person name="Barber A."/>
            <person name="Seidel R.D."/>
            <person name="Babbitt P.C."/>
            <person name="Almo S.C."/>
            <person name="Gerlt J.A."/>
            <person name="Jacobson M.P."/>
        </authorList>
    </citation>
    <scope>FUNCTION</scope>
    <scope>CATALYTIC ACTIVITY</scope>
</reference>